<reference key="1">
    <citation type="journal article" date="2010" name="J. Bacteriol.">
        <title>Complete genome sequence of the aerobic facultative methanotroph Methylocella silvestris BL2.</title>
        <authorList>
            <person name="Chen Y."/>
            <person name="Crombie A."/>
            <person name="Rahman M.T."/>
            <person name="Dedysh S.N."/>
            <person name="Liesack W."/>
            <person name="Stott M.B."/>
            <person name="Alam M."/>
            <person name="Theisen A.R."/>
            <person name="Murrell J.C."/>
            <person name="Dunfield P.F."/>
        </authorList>
    </citation>
    <scope>NUCLEOTIDE SEQUENCE [LARGE SCALE GENOMIC DNA]</scope>
    <source>
        <strain>DSM 15510 / CIP 108128 / LMG 27833 / NCIMB 13906 / BL2</strain>
    </source>
</reference>
<comment type="function">
    <text evidence="1">Involved in the binding of tRNA to the ribosomes.</text>
</comment>
<comment type="subunit">
    <text evidence="1">Part of the 30S ribosomal subunit.</text>
</comment>
<comment type="similarity">
    <text evidence="1">Belongs to the universal ribosomal protein uS10 family.</text>
</comment>
<keyword id="KW-1185">Reference proteome</keyword>
<keyword id="KW-0687">Ribonucleoprotein</keyword>
<keyword id="KW-0689">Ribosomal protein</keyword>
<gene>
    <name evidence="1" type="primary">rpsJ</name>
    <name type="ordered locus">Msil_0581</name>
</gene>
<name>RS10_METSB</name>
<proteinExistence type="inferred from homology"/>
<evidence type="ECO:0000255" key="1">
    <source>
        <dbReference type="HAMAP-Rule" id="MF_00508"/>
    </source>
</evidence>
<evidence type="ECO:0000305" key="2"/>
<organism>
    <name type="scientific">Methylocella silvestris (strain DSM 15510 / CIP 108128 / LMG 27833 / NCIMB 13906 / BL2)</name>
    <dbReference type="NCBI Taxonomy" id="395965"/>
    <lineage>
        <taxon>Bacteria</taxon>
        <taxon>Pseudomonadati</taxon>
        <taxon>Pseudomonadota</taxon>
        <taxon>Alphaproteobacteria</taxon>
        <taxon>Hyphomicrobiales</taxon>
        <taxon>Beijerinckiaceae</taxon>
        <taxon>Methylocella</taxon>
    </lineage>
</organism>
<protein>
    <recommendedName>
        <fullName evidence="1">Small ribosomal subunit protein uS10</fullName>
    </recommendedName>
    <alternativeName>
        <fullName evidence="2">30S ribosomal protein S10</fullName>
    </alternativeName>
</protein>
<accession>B8ELG4</accession>
<dbReference type="EMBL" id="CP001280">
    <property type="protein sequence ID" value="ACK49553.1"/>
    <property type="molecule type" value="Genomic_DNA"/>
</dbReference>
<dbReference type="RefSeq" id="WP_012589623.1">
    <property type="nucleotide sequence ID" value="NC_011666.1"/>
</dbReference>
<dbReference type="SMR" id="B8ELG4"/>
<dbReference type="STRING" id="395965.Msil_0581"/>
<dbReference type="KEGG" id="msl:Msil_0581"/>
<dbReference type="eggNOG" id="COG0051">
    <property type="taxonomic scope" value="Bacteria"/>
</dbReference>
<dbReference type="HOGENOM" id="CLU_122625_1_3_5"/>
<dbReference type="OrthoDB" id="9804464at2"/>
<dbReference type="Proteomes" id="UP000002257">
    <property type="component" value="Chromosome"/>
</dbReference>
<dbReference type="GO" id="GO:1990904">
    <property type="term" value="C:ribonucleoprotein complex"/>
    <property type="evidence" value="ECO:0007669"/>
    <property type="project" value="UniProtKB-KW"/>
</dbReference>
<dbReference type="GO" id="GO:0005840">
    <property type="term" value="C:ribosome"/>
    <property type="evidence" value="ECO:0007669"/>
    <property type="project" value="UniProtKB-KW"/>
</dbReference>
<dbReference type="GO" id="GO:0003735">
    <property type="term" value="F:structural constituent of ribosome"/>
    <property type="evidence" value="ECO:0007669"/>
    <property type="project" value="InterPro"/>
</dbReference>
<dbReference type="GO" id="GO:0000049">
    <property type="term" value="F:tRNA binding"/>
    <property type="evidence" value="ECO:0007669"/>
    <property type="project" value="UniProtKB-UniRule"/>
</dbReference>
<dbReference type="GO" id="GO:0006412">
    <property type="term" value="P:translation"/>
    <property type="evidence" value="ECO:0007669"/>
    <property type="project" value="UniProtKB-UniRule"/>
</dbReference>
<dbReference type="FunFam" id="3.30.70.600:FF:000001">
    <property type="entry name" value="30S ribosomal protein S10"/>
    <property type="match status" value="1"/>
</dbReference>
<dbReference type="Gene3D" id="3.30.70.600">
    <property type="entry name" value="Ribosomal protein S10 domain"/>
    <property type="match status" value="1"/>
</dbReference>
<dbReference type="HAMAP" id="MF_00508">
    <property type="entry name" value="Ribosomal_uS10"/>
    <property type="match status" value="1"/>
</dbReference>
<dbReference type="InterPro" id="IPR001848">
    <property type="entry name" value="Ribosomal_uS10"/>
</dbReference>
<dbReference type="InterPro" id="IPR018268">
    <property type="entry name" value="Ribosomal_uS10_CS"/>
</dbReference>
<dbReference type="InterPro" id="IPR027486">
    <property type="entry name" value="Ribosomal_uS10_dom"/>
</dbReference>
<dbReference type="InterPro" id="IPR036838">
    <property type="entry name" value="Ribosomal_uS10_dom_sf"/>
</dbReference>
<dbReference type="NCBIfam" id="NF001861">
    <property type="entry name" value="PRK00596.1"/>
    <property type="match status" value="1"/>
</dbReference>
<dbReference type="NCBIfam" id="TIGR01049">
    <property type="entry name" value="rpsJ_bact"/>
    <property type="match status" value="1"/>
</dbReference>
<dbReference type="PANTHER" id="PTHR11700">
    <property type="entry name" value="30S RIBOSOMAL PROTEIN S10 FAMILY MEMBER"/>
    <property type="match status" value="1"/>
</dbReference>
<dbReference type="Pfam" id="PF00338">
    <property type="entry name" value="Ribosomal_S10"/>
    <property type="match status" value="1"/>
</dbReference>
<dbReference type="PRINTS" id="PR00971">
    <property type="entry name" value="RIBOSOMALS10"/>
</dbReference>
<dbReference type="SMART" id="SM01403">
    <property type="entry name" value="Ribosomal_S10"/>
    <property type="match status" value="1"/>
</dbReference>
<dbReference type="SUPFAM" id="SSF54999">
    <property type="entry name" value="Ribosomal protein S10"/>
    <property type="match status" value="1"/>
</dbReference>
<dbReference type="PROSITE" id="PS00361">
    <property type="entry name" value="RIBOSOMAL_S10"/>
    <property type="match status" value="1"/>
</dbReference>
<feature type="chain" id="PRO_1000146065" description="Small ribosomal subunit protein uS10">
    <location>
        <begin position="1"/>
        <end position="102"/>
    </location>
</feature>
<sequence>MNGQNIRIRLKAFDHRILDTSTKEIVSTAKRTGAHVRGPIPLPTKIEKFTVNRSPHVDKKSREQFEIRTHKRVLDIVDPTPQTVDALMKLDLAAGVDVEIKL</sequence>